<comment type="function">
    <text evidence="1">Required for nucleoid occlusion (NO) phenomenon, which prevents Z-ring formation and cell division over the nucleoid. Acts as a DNA-associated cell division inhibitor that binds simultaneously chromosomal DNA and FtsZ, and disrupts the assembly of FtsZ polymers. SlmA-DNA-binding sequences (SBS) are dispersed on non-Ter regions of the chromosome, preventing FtsZ polymerization at these regions.</text>
</comment>
<comment type="subunit">
    <text evidence="1">Homodimer. Interacts with FtsZ.</text>
</comment>
<comment type="subcellular location">
    <subcellularLocation>
        <location evidence="1">Cytoplasm</location>
        <location evidence="1">Nucleoid</location>
    </subcellularLocation>
</comment>
<comment type="similarity">
    <text evidence="1">Belongs to the nucleoid occlusion factor SlmA family.</text>
</comment>
<protein>
    <recommendedName>
        <fullName evidence="1">Nucleoid occlusion factor SlmA</fullName>
    </recommendedName>
</protein>
<evidence type="ECO:0000255" key="1">
    <source>
        <dbReference type="HAMAP-Rule" id="MF_01839"/>
    </source>
</evidence>
<accession>A3QIQ2</accession>
<reference key="1">
    <citation type="submission" date="2007-03" db="EMBL/GenBank/DDBJ databases">
        <title>Complete sequence of Shewanella loihica PV-4.</title>
        <authorList>
            <consortium name="US DOE Joint Genome Institute"/>
            <person name="Copeland A."/>
            <person name="Lucas S."/>
            <person name="Lapidus A."/>
            <person name="Barry K."/>
            <person name="Detter J.C."/>
            <person name="Glavina del Rio T."/>
            <person name="Hammon N."/>
            <person name="Israni S."/>
            <person name="Dalin E."/>
            <person name="Tice H."/>
            <person name="Pitluck S."/>
            <person name="Chain P."/>
            <person name="Malfatti S."/>
            <person name="Shin M."/>
            <person name="Vergez L."/>
            <person name="Schmutz J."/>
            <person name="Larimer F."/>
            <person name="Land M."/>
            <person name="Hauser L."/>
            <person name="Kyrpides N."/>
            <person name="Mikhailova N."/>
            <person name="Romine M.F."/>
            <person name="Serres G."/>
            <person name="Fredrickson J."/>
            <person name="Tiedje J."/>
            <person name="Richardson P."/>
        </authorList>
    </citation>
    <scope>NUCLEOTIDE SEQUENCE [LARGE SCALE GENOMIC DNA]</scope>
    <source>
        <strain>ATCC BAA-1088 / PV-4</strain>
    </source>
</reference>
<feature type="chain" id="PRO_1000070529" description="Nucleoid occlusion factor SlmA">
    <location>
        <begin position="1"/>
        <end position="197"/>
    </location>
</feature>
<feature type="domain" description="HTH tetR-type" evidence="1">
    <location>
        <begin position="7"/>
        <end position="67"/>
    </location>
</feature>
<feature type="DNA-binding region" description="H-T-H motif" evidence="1">
    <location>
        <begin position="30"/>
        <end position="49"/>
    </location>
</feature>
<dbReference type="EMBL" id="CP000606">
    <property type="protein sequence ID" value="ABO25350.1"/>
    <property type="molecule type" value="Genomic_DNA"/>
</dbReference>
<dbReference type="RefSeq" id="WP_011867279.1">
    <property type="nucleotide sequence ID" value="NC_009092.1"/>
</dbReference>
<dbReference type="SMR" id="A3QIQ2"/>
<dbReference type="STRING" id="323850.Shew_3484"/>
<dbReference type="KEGG" id="slo:Shew_3484"/>
<dbReference type="eggNOG" id="COG1309">
    <property type="taxonomic scope" value="Bacteria"/>
</dbReference>
<dbReference type="HOGENOM" id="CLU_069356_5_0_6"/>
<dbReference type="OrthoDB" id="9179041at2"/>
<dbReference type="Proteomes" id="UP000001558">
    <property type="component" value="Chromosome"/>
</dbReference>
<dbReference type="GO" id="GO:0043590">
    <property type="term" value="C:bacterial nucleoid"/>
    <property type="evidence" value="ECO:0007669"/>
    <property type="project" value="UniProtKB-UniRule"/>
</dbReference>
<dbReference type="GO" id="GO:0005737">
    <property type="term" value="C:cytoplasm"/>
    <property type="evidence" value="ECO:0007669"/>
    <property type="project" value="UniProtKB-UniRule"/>
</dbReference>
<dbReference type="GO" id="GO:0043565">
    <property type="term" value="F:sequence-specific DNA binding"/>
    <property type="evidence" value="ECO:0007669"/>
    <property type="project" value="UniProtKB-UniRule"/>
</dbReference>
<dbReference type="GO" id="GO:0051301">
    <property type="term" value="P:cell division"/>
    <property type="evidence" value="ECO:0007669"/>
    <property type="project" value="UniProtKB-KW"/>
</dbReference>
<dbReference type="GO" id="GO:0010974">
    <property type="term" value="P:negative regulation of division septum assembly"/>
    <property type="evidence" value="ECO:0007669"/>
    <property type="project" value="InterPro"/>
</dbReference>
<dbReference type="Gene3D" id="1.10.357.10">
    <property type="entry name" value="Tetracycline Repressor, domain 2"/>
    <property type="match status" value="1"/>
</dbReference>
<dbReference type="HAMAP" id="MF_01839">
    <property type="entry name" value="NO_factor_SlmA"/>
    <property type="match status" value="1"/>
</dbReference>
<dbReference type="InterPro" id="IPR009057">
    <property type="entry name" value="Homeodomain-like_sf"/>
</dbReference>
<dbReference type="InterPro" id="IPR050624">
    <property type="entry name" value="HTH-type_Tx_Regulator"/>
</dbReference>
<dbReference type="InterPro" id="IPR001647">
    <property type="entry name" value="HTH_TetR"/>
</dbReference>
<dbReference type="InterPro" id="IPR023769">
    <property type="entry name" value="NO_SlmA"/>
</dbReference>
<dbReference type="InterPro" id="IPR054580">
    <property type="entry name" value="SlmA-like_C"/>
</dbReference>
<dbReference type="NCBIfam" id="NF007015">
    <property type="entry name" value="PRK09480.1"/>
    <property type="match status" value="1"/>
</dbReference>
<dbReference type="PANTHER" id="PTHR43479">
    <property type="entry name" value="ACREF/ENVCD OPERON REPRESSOR-RELATED"/>
    <property type="match status" value="1"/>
</dbReference>
<dbReference type="PANTHER" id="PTHR43479:SF11">
    <property type="entry name" value="ACREF_ENVCD OPERON REPRESSOR-RELATED"/>
    <property type="match status" value="1"/>
</dbReference>
<dbReference type="Pfam" id="PF22276">
    <property type="entry name" value="SlmA-like_C"/>
    <property type="match status" value="1"/>
</dbReference>
<dbReference type="Pfam" id="PF00440">
    <property type="entry name" value="TetR_N"/>
    <property type="match status" value="1"/>
</dbReference>
<dbReference type="SUPFAM" id="SSF46689">
    <property type="entry name" value="Homeodomain-like"/>
    <property type="match status" value="1"/>
</dbReference>
<dbReference type="PROSITE" id="PS50977">
    <property type="entry name" value="HTH_TETR_2"/>
    <property type="match status" value="1"/>
</dbReference>
<keyword id="KW-0131">Cell cycle</keyword>
<keyword id="KW-0132">Cell division</keyword>
<keyword id="KW-0963">Cytoplasm</keyword>
<keyword id="KW-0238">DNA-binding</keyword>
<keyword id="KW-1185">Reference proteome</keyword>
<organism>
    <name type="scientific">Shewanella loihica (strain ATCC BAA-1088 / PV-4)</name>
    <dbReference type="NCBI Taxonomy" id="323850"/>
    <lineage>
        <taxon>Bacteria</taxon>
        <taxon>Pseudomonadati</taxon>
        <taxon>Pseudomonadota</taxon>
        <taxon>Gammaproteobacteria</taxon>
        <taxon>Alteromonadales</taxon>
        <taxon>Shewanellaceae</taxon>
        <taxon>Shewanella</taxon>
    </lineage>
</organism>
<name>SLMA_SHELP</name>
<proteinExistence type="inferred from homology"/>
<sequence length="197" mass="22515">MAASPKINRREHILQCLATMLETSPGQRITTAKLAAEVGVSEAALYRHFPSKARMFEGLIDFIEESLLSRINLIMDEEKDTMRRCQLLLQLLLVFAERNPGISRVLNGDALLGENERLRNRTGQIFSKVETHLKQILREKTLREGKGFNLDEAILANLLLAVAEGRIAQFVRSDFKNKPTEHFAEQWQFIQQQLLQS</sequence>
<gene>
    <name evidence="1" type="primary">slmA</name>
    <name type="ordered locus">Shew_3484</name>
</gene>